<name>SI1L3_HUMAN</name>
<dbReference type="EMBL" id="AY168880">
    <property type="protein sequence ID" value="AAO12531.1"/>
    <property type="molecule type" value="mRNA"/>
</dbReference>
<dbReference type="EMBL" id="AB011117">
    <property type="protein sequence ID" value="BAA25471.2"/>
    <property type="molecule type" value="mRNA"/>
</dbReference>
<dbReference type="EMBL" id="AC011465">
    <property type="status" value="NOT_ANNOTATED_CDS"/>
    <property type="molecule type" value="Genomic_DNA"/>
</dbReference>
<dbReference type="EMBL" id="AC011479">
    <property type="status" value="NOT_ANNOTATED_CDS"/>
    <property type="molecule type" value="Genomic_DNA"/>
</dbReference>
<dbReference type="CCDS" id="CCDS33007.1"/>
<dbReference type="RefSeq" id="NP_055888.1">
    <property type="nucleotide sequence ID" value="NM_015073.3"/>
</dbReference>
<dbReference type="RefSeq" id="XP_005258728.1">
    <property type="nucleotide sequence ID" value="XM_005258671.4"/>
</dbReference>
<dbReference type="RefSeq" id="XP_011524959.1">
    <property type="nucleotide sequence ID" value="XM_011526657.3"/>
</dbReference>
<dbReference type="RefSeq" id="XP_016882006.1">
    <property type="nucleotide sequence ID" value="XM_017026517.1"/>
</dbReference>
<dbReference type="RefSeq" id="XP_047294442.1">
    <property type="nucleotide sequence ID" value="XM_047438486.1"/>
</dbReference>
<dbReference type="RefSeq" id="XP_047294443.1">
    <property type="nucleotide sequence ID" value="XM_047438487.1"/>
</dbReference>
<dbReference type="RefSeq" id="XP_047294444.1">
    <property type="nucleotide sequence ID" value="XM_047438488.1"/>
</dbReference>
<dbReference type="RefSeq" id="XP_047294445.1">
    <property type="nucleotide sequence ID" value="XM_047438489.1"/>
</dbReference>
<dbReference type="SMR" id="O60292"/>
<dbReference type="BioGRID" id="116722">
    <property type="interactions" value="133"/>
</dbReference>
<dbReference type="FunCoup" id="O60292">
    <property type="interactions" value="1217"/>
</dbReference>
<dbReference type="IntAct" id="O60292">
    <property type="interactions" value="61"/>
</dbReference>
<dbReference type="MINT" id="O60292"/>
<dbReference type="STRING" id="9606.ENSP00000222345"/>
<dbReference type="GlyGen" id="O60292">
    <property type="glycosylation" value="6 sites, 1 N-linked glycan (1 site), 1 O-linked glycan (1 site)"/>
</dbReference>
<dbReference type="iPTMnet" id="O60292"/>
<dbReference type="PhosphoSitePlus" id="O60292"/>
<dbReference type="BioMuta" id="SIPA1L3"/>
<dbReference type="jPOST" id="O60292"/>
<dbReference type="MassIVE" id="O60292"/>
<dbReference type="PaxDb" id="9606-ENSP00000222345"/>
<dbReference type="PeptideAtlas" id="O60292"/>
<dbReference type="ProteomicsDB" id="49323"/>
<dbReference type="Pumba" id="O60292"/>
<dbReference type="Antibodypedia" id="59222">
    <property type="antibodies" value="66 antibodies from 20 providers"/>
</dbReference>
<dbReference type="DNASU" id="23094"/>
<dbReference type="Ensembl" id="ENST00000222345.11">
    <property type="protein sequence ID" value="ENSP00000222345.4"/>
    <property type="gene ID" value="ENSG00000105738.11"/>
</dbReference>
<dbReference type="GeneID" id="23094"/>
<dbReference type="KEGG" id="hsa:23094"/>
<dbReference type="MANE-Select" id="ENST00000222345.11">
    <property type="protein sequence ID" value="ENSP00000222345.4"/>
    <property type="RefSeq nucleotide sequence ID" value="NM_015073.3"/>
    <property type="RefSeq protein sequence ID" value="NP_055888.1"/>
</dbReference>
<dbReference type="UCSC" id="uc002ohk.4">
    <property type="organism name" value="human"/>
</dbReference>
<dbReference type="AGR" id="HGNC:23801"/>
<dbReference type="CTD" id="23094"/>
<dbReference type="DisGeNET" id="23094"/>
<dbReference type="GeneCards" id="SIPA1L3"/>
<dbReference type="HGNC" id="HGNC:23801">
    <property type="gene designation" value="SIPA1L3"/>
</dbReference>
<dbReference type="HPA" id="ENSG00000105738">
    <property type="expression patterns" value="Low tissue specificity"/>
</dbReference>
<dbReference type="MalaCards" id="SIPA1L3"/>
<dbReference type="MIM" id="616655">
    <property type="type" value="gene"/>
</dbReference>
<dbReference type="MIM" id="616851">
    <property type="type" value="phenotype"/>
</dbReference>
<dbReference type="neXtProt" id="NX_O60292"/>
<dbReference type="OpenTargets" id="ENSG00000105738"/>
<dbReference type="Orphanet" id="98994">
    <property type="disease" value="Total early-onset cataract"/>
</dbReference>
<dbReference type="PharmGKB" id="PA134866783"/>
<dbReference type="VEuPathDB" id="HostDB:ENSG00000105738"/>
<dbReference type="eggNOG" id="KOG3686">
    <property type="taxonomic scope" value="Eukaryota"/>
</dbReference>
<dbReference type="GeneTree" id="ENSGT00940000159183"/>
<dbReference type="HOGENOM" id="CLU_002127_0_0_1"/>
<dbReference type="InParanoid" id="O60292"/>
<dbReference type="OMA" id="EDMGEPR"/>
<dbReference type="OrthoDB" id="2499658at2759"/>
<dbReference type="PAN-GO" id="O60292">
    <property type="GO annotations" value="7 GO annotations based on evolutionary models"/>
</dbReference>
<dbReference type="PhylomeDB" id="O60292"/>
<dbReference type="TreeFam" id="TF318626"/>
<dbReference type="PathwayCommons" id="O60292"/>
<dbReference type="SignaLink" id="O60292"/>
<dbReference type="BioGRID-ORCS" id="23094">
    <property type="hits" value="15 hits in 1155 CRISPR screens"/>
</dbReference>
<dbReference type="ChiTaRS" id="SIPA1L3">
    <property type="organism name" value="human"/>
</dbReference>
<dbReference type="GenomeRNAi" id="23094"/>
<dbReference type="Pharos" id="O60292">
    <property type="development level" value="Tbio"/>
</dbReference>
<dbReference type="PRO" id="PR:O60292"/>
<dbReference type="Proteomes" id="UP000005640">
    <property type="component" value="Chromosome 19"/>
</dbReference>
<dbReference type="RNAct" id="O60292">
    <property type="molecule type" value="protein"/>
</dbReference>
<dbReference type="Bgee" id="ENSG00000105738">
    <property type="expression patterns" value="Expressed in buccal mucosa cell and 188 other cell types or tissues"/>
</dbReference>
<dbReference type="ExpressionAtlas" id="O60292">
    <property type="expression patterns" value="baseline and differential"/>
</dbReference>
<dbReference type="GO" id="GO:0045177">
    <property type="term" value="C:apical part of cell"/>
    <property type="evidence" value="ECO:0000315"/>
    <property type="project" value="UniProtKB"/>
</dbReference>
<dbReference type="GO" id="GO:0016324">
    <property type="term" value="C:apical plasma membrane"/>
    <property type="evidence" value="ECO:0007669"/>
    <property type="project" value="UniProtKB-SubCell"/>
</dbReference>
<dbReference type="GO" id="GO:0005737">
    <property type="term" value="C:cytoplasm"/>
    <property type="evidence" value="ECO:0000318"/>
    <property type="project" value="GO_Central"/>
</dbReference>
<dbReference type="GO" id="GO:0005615">
    <property type="term" value="C:extracellular space"/>
    <property type="evidence" value="ECO:0007005"/>
    <property type="project" value="UniProtKB"/>
</dbReference>
<dbReference type="GO" id="GO:0098978">
    <property type="term" value="C:glutamatergic synapse"/>
    <property type="evidence" value="ECO:0007669"/>
    <property type="project" value="Ensembl"/>
</dbReference>
<dbReference type="GO" id="GO:0005794">
    <property type="term" value="C:Golgi apparatus"/>
    <property type="evidence" value="ECO:0000314"/>
    <property type="project" value="HPA"/>
</dbReference>
<dbReference type="GO" id="GO:0005654">
    <property type="term" value="C:nucleoplasm"/>
    <property type="evidence" value="ECO:0000314"/>
    <property type="project" value="HPA"/>
</dbReference>
<dbReference type="GO" id="GO:0005886">
    <property type="term" value="C:plasma membrane"/>
    <property type="evidence" value="ECO:0000314"/>
    <property type="project" value="HPA"/>
</dbReference>
<dbReference type="GO" id="GO:0099091">
    <property type="term" value="C:postsynaptic specialization, intracellular component"/>
    <property type="evidence" value="ECO:0007669"/>
    <property type="project" value="Ensembl"/>
</dbReference>
<dbReference type="GO" id="GO:0001725">
    <property type="term" value="C:stress fiber"/>
    <property type="evidence" value="ECO:0000314"/>
    <property type="project" value="UniProtKB"/>
</dbReference>
<dbReference type="GO" id="GO:0061689">
    <property type="term" value="C:tricellular tight junction"/>
    <property type="evidence" value="ECO:0000314"/>
    <property type="project" value="UniProtKB"/>
</dbReference>
<dbReference type="GO" id="GO:0005096">
    <property type="term" value="F:GTPase activator activity"/>
    <property type="evidence" value="ECO:0000318"/>
    <property type="project" value="GO_Central"/>
</dbReference>
<dbReference type="GO" id="GO:0007010">
    <property type="term" value="P:cytoskeleton organization"/>
    <property type="evidence" value="ECO:0000250"/>
    <property type="project" value="UniProtKB"/>
</dbReference>
<dbReference type="GO" id="GO:0003382">
    <property type="term" value="P:epithelial cell morphogenesis"/>
    <property type="evidence" value="ECO:0000314"/>
    <property type="project" value="UniProtKB"/>
</dbReference>
<dbReference type="GO" id="GO:0090162">
    <property type="term" value="P:establishment of epithelial cell polarity"/>
    <property type="evidence" value="ECO:0000314"/>
    <property type="project" value="UniProtKB"/>
</dbReference>
<dbReference type="GO" id="GO:0001654">
    <property type="term" value="P:eye development"/>
    <property type="evidence" value="ECO:0000250"/>
    <property type="project" value="UniProtKB"/>
</dbReference>
<dbReference type="GO" id="GO:0002244">
    <property type="term" value="P:hematopoietic progenitor cell differentiation"/>
    <property type="evidence" value="ECO:0007669"/>
    <property type="project" value="Ensembl"/>
</dbReference>
<dbReference type="GO" id="GO:0051056">
    <property type="term" value="P:regulation of small GTPase mediated signal transduction"/>
    <property type="evidence" value="ECO:0007669"/>
    <property type="project" value="InterPro"/>
</dbReference>
<dbReference type="CDD" id="cd06745">
    <property type="entry name" value="PDZ_SIPA1-like"/>
    <property type="match status" value="1"/>
</dbReference>
<dbReference type="FunFam" id="3.40.50.11210:FF:000002">
    <property type="entry name" value="Signal-induced proliferation-associated 1-like protein 1"/>
    <property type="match status" value="1"/>
</dbReference>
<dbReference type="Gene3D" id="2.30.42.10">
    <property type="match status" value="1"/>
</dbReference>
<dbReference type="Gene3D" id="6.10.140.210">
    <property type="match status" value="1"/>
</dbReference>
<dbReference type="Gene3D" id="3.40.50.11210">
    <property type="entry name" value="Rap/Ran-GAP"/>
    <property type="match status" value="1"/>
</dbReference>
<dbReference type="InterPro" id="IPR001478">
    <property type="entry name" value="PDZ"/>
</dbReference>
<dbReference type="InterPro" id="IPR036034">
    <property type="entry name" value="PDZ_sf"/>
</dbReference>
<dbReference type="InterPro" id="IPR035974">
    <property type="entry name" value="Rap/Ran-GAP_sf"/>
</dbReference>
<dbReference type="InterPro" id="IPR000331">
    <property type="entry name" value="Rap/Ran_GAP_dom"/>
</dbReference>
<dbReference type="InterPro" id="IPR050989">
    <property type="entry name" value="Rap1_Ran_GAP"/>
</dbReference>
<dbReference type="InterPro" id="IPR021818">
    <property type="entry name" value="SIPA1L_C"/>
</dbReference>
<dbReference type="PANTHER" id="PTHR15711">
    <property type="entry name" value="RAP GTPASE-ACTIVATING PROTEIN"/>
    <property type="match status" value="1"/>
</dbReference>
<dbReference type="PANTHER" id="PTHR15711:SF15">
    <property type="entry name" value="SIGNAL-INDUCED PROLIFERATION-ASSOCIATED 1-LIKE PROTEIN 3"/>
    <property type="match status" value="1"/>
</dbReference>
<dbReference type="Pfam" id="PF00595">
    <property type="entry name" value="PDZ"/>
    <property type="match status" value="1"/>
</dbReference>
<dbReference type="Pfam" id="PF21022">
    <property type="entry name" value="Rap-GAP_dimer"/>
    <property type="match status" value="1"/>
</dbReference>
<dbReference type="Pfam" id="PF02145">
    <property type="entry name" value="Rap_GAP"/>
    <property type="match status" value="1"/>
</dbReference>
<dbReference type="Pfam" id="PF11881">
    <property type="entry name" value="SPAR_C"/>
    <property type="match status" value="1"/>
</dbReference>
<dbReference type="SMART" id="SM00228">
    <property type="entry name" value="PDZ"/>
    <property type="match status" value="1"/>
</dbReference>
<dbReference type="SUPFAM" id="SSF50156">
    <property type="entry name" value="PDZ domain-like"/>
    <property type="match status" value="1"/>
</dbReference>
<dbReference type="SUPFAM" id="SSF111347">
    <property type="entry name" value="Rap/Ran-GAP"/>
    <property type="match status" value="1"/>
</dbReference>
<dbReference type="PROSITE" id="PS50106">
    <property type="entry name" value="PDZ"/>
    <property type="match status" value="1"/>
</dbReference>
<dbReference type="PROSITE" id="PS50085">
    <property type="entry name" value="RAPGAP"/>
    <property type="match status" value="1"/>
</dbReference>
<evidence type="ECO:0000250" key="1">
    <source>
        <dbReference type="UniProtKB" id="G3X9J0"/>
    </source>
</evidence>
<evidence type="ECO:0000255" key="2"/>
<evidence type="ECO:0000255" key="3">
    <source>
        <dbReference type="PROSITE-ProRule" id="PRU00143"/>
    </source>
</evidence>
<evidence type="ECO:0000255" key="4">
    <source>
        <dbReference type="PROSITE-ProRule" id="PRU00165"/>
    </source>
</evidence>
<evidence type="ECO:0000256" key="5">
    <source>
        <dbReference type="SAM" id="MobiDB-lite"/>
    </source>
</evidence>
<evidence type="ECO:0000269" key="6">
    <source>
    </source>
</evidence>
<evidence type="ECO:0000269" key="7">
    <source>
    </source>
</evidence>
<evidence type="ECO:0007744" key="8">
    <source>
    </source>
</evidence>
<evidence type="ECO:0007744" key="9">
    <source>
    </source>
</evidence>
<evidence type="ECO:0007744" key="10">
    <source>
    </source>
</evidence>
<evidence type="ECO:0007744" key="11">
    <source>
    </source>
</evidence>
<evidence type="ECO:0007744" key="12">
    <source>
    </source>
</evidence>
<keyword id="KW-0007">Acetylation</keyword>
<keyword id="KW-0898">Cataract</keyword>
<keyword id="KW-1003">Cell membrane</keyword>
<keyword id="KW-0160">Chromosomal rearrangement</keyword>
<keyword id="KW-0175">Coiled coil</keyword>
<keyword id="KW-0343">GTPase activation</keyword>
<keyword id="KW-0472">Membrane</keyword>
<keyword id="KW-0597">Phosphoprotein</keyword>
<keyword id="KW-1267">Proteomics identification</keyword>
<keyword id="KW-1185">Reference proteome</keyword>
<accession>O60292</accession>
<accession>Q2TV87</accession>
<organism>
    <name type="scientific">Homo sapiens</name>
    <name type="common">Human</name>
    <dbReference type="NCBI Taxonomy" id="9606"/>
    <lineage>
        <taxon>Eukaryota</taxon>
        <taxon>Metazoa</taxon>
        <taxon>Chordata</taxon>
        <taxon>Craniata</taxon>
        <taxon>Vertebrata</taxon>
        <taxon>Euteleostomi</taxon>
        <taxon>Mammalia</taxon>
        <taxon>Eutheria</taxon>
        <taxon>Euarchontoglires</taxon>
        <taxon>Primates</taxon>
        <taxon>Haplorrhini</taxon>
        <taxon>Catarrhini</taxon>
        <taxon>Hominidae</taxon>
        <taxon>Homo</taxon>
    </lineage>
</organism>
<proteinExistence type="evidence at protein level"/>
<comment type="function">
    <text evidence="7">Plays a critical role in epithelial cell morphogenesis, polarity, adhesion and cytoskeletal organization in the lens (PubMed:26231217).</text>
</comment>
<comment type="interaction">
    <interactant intactId="EBI-2559690">
        <id>O60292</id>
    </interactant>
    <interactant intactId="EBI-476295">
        <id>P31947</id>
        <label>SFN</label>
    </interactant>
    <organismsDiffer>false</organismsDiffer>
    <experiments>4</experiments>
</comment>
<comment type="interaction">
    <interactant intactId="EBI-2559690">
        <id>O60292</id>
    </interactant>
    <interactant intactId="EBI-347088">
        <id>P63104</id>
        <label>YWHAZ</label>
    </interactant>
    <organismsDiffer>false</organismsDiffer>
    <experiments>6</experiments>
</comment>
<comment type="subcellular location">
    <subcellularLocation>
        <location evidence="7">Apical cell membrane</location>
    </subcellularLocation>
    <text evidence="7">Detected in tricellular junctions. Colocalizes with apical F-actin.</text>
</comment>
<comment type="disease">
    <text evidence="7">A chromosomal translocation involving SIPA1L3 is found in a patient with bilateral severe ocular abnormalities including congenital cataracts, corneal clouding, iridocorneal and lenticular adhesions and microphthalmia. Chromosomal translocation t(2;19)(q37.3;q13.1). In addition to translocation, missense variant has been found in patient with bilateral congenital cataracts (PubMed:26231217).</text>
</comment>
<comment type="disease" evidence="6">
    <disease id="DI-04671">
        <name>Cataract 45</name>
        <acronym>CTRCT45</acronym>
        <description>An opacification of the crystalline lens of the eye that frequently results in visual impairment or blindness. Opacities vary in morphology, are often confined to a portion of the lens, and may be static or progressive. In general, the more posteriorly located and dense an opacity, the greater the impact on visual function.</description>
        <dbReference type="MIM" id="616851"/>
    </disease>
    <text>The disease is caused by variants affecting the gene represented in this entry.</text>
</comment>
<feature type="chain" id="PRO_0000056752" description="Signal-induced proliferation-associated 1-like protein 3">
    <location>
        <begin position="1"/>
        <end position="1781"/>
    </location>
</feature>
<feature type="domain" description="Rap-GAP" evidence="4">
    <location>
        <begin position="611"/>
        <end position="828"/>
    </location>
</feature>
<feature type="domain" description="PDZ" evidence="3">
    <location>
        <begin position="966"/>
        <end position="1042"/>
    </location>
</feature>
<feature type="region of interest" description="Disordered" evidence="5">
    <location>
        <begin position="45"/>
        <end position="166"/>
    </location>
</feature>
<feature type="region of interest" description="Disordered" evidence="5">
    <location>
        <begin position="239"/>
        <end position="332"/>
    </location>
</feature>
<feature type="region of interest" description="Disordered" evidence="5">
    <location>
        <begin position="1046"/>
        <end position="1112"/>
    </location>
</feature>
<feature type="region of interest" description="Disordered" evidence="5">
    <location>
        <begin position="1124"/>
        <end position="1221"/>
    </location>
</feature>
<feature type="region of interest" description="Disordered" evidence="5">
    <location>
        <begin position="1236"/>
        <end position="1565"/>
    </location>
</feature>
<feature type="region of interest" description="Disordered" evidence="5">
    <location>
        <begin position="1583"/>
        <end position="1636"/>
    </location>
</feature>
<feature type="region of interest" description="Disordered" evidence="5">
    <location>
        <begin position="1685"/>
        <end position="1712"/>
    </location>
</feature>
<feature type="coiled-coil region" evidence="2">
    <location>
        <begin position="1720"/>
        <end position="1774"/>
    </location>
</feature>
<feature type="compositionally biased region" description="Low complexity" evidence="5">
    <location>
        <begin position="54"/>
        <end position="73"/>
    </location>
</feature>
<feature type="compositionally biased region" description="Basic and acidic residues" evidence="5">
    <location>
        <begin position="87"/>
        <end position="97"/>
    </location>
</feature>
<feature type="compositionally biased region" description="Polar residues" evidence="5">
    <location>
        <begin position="118"/>
        <end position="135"/>
    </location>
</feature>
<feature type="compositionally biased region" description="Basic residues" evidence="5">
    <location>
        <begin position="137"/>
        <end position="146"/>
    </location>
</feature>
<feature type="compositionally biased region" description="Polar residues" evidence="5">
    <location>
        <begin position="1080"/>
        <end position="1111"/>
    </location>
</feature>
<feature type="compositionally biased region" description="Polar residues" evidence="5">
    <location>
        <begin position="1157"/>
        <end position="1166"/>
    </location>
</feature>
<feature type="compositionally biased region" description="Low complexity" evidence="5">
    <location>
        <begin position="1196"/>
        <end position="1210"/>
    </location>
</feature>
<feature type="compositionally biased region" description="Basic and acidic residues" evidence="5">
    <location>
        <begin position="1245"/>
        <end position="1261"/>
    </location>
</feature>
<feature type="compositionally biased region" description="Low complexity" evidence="5">
    <location>
        <begin position="1266"/>
        <end position="1281"/>
    </location>
</feature>
<feature type="compositionally biased region" description="Polar residues" evidence="5">
    <location>
        <begin position="1304"/>
        <end position="1322"/>
    </location>
</feature>
<feature type="compositionally biased region" description="Polar residues" evidence="5">
    <location>
        <begin position="1425"/>
        <end position="1441"/>
    </location>
</feature>
<feature type="compositionally biased region" description="Basic and acidic residues" evidence="5">
    <location>
        <begin position="1509"/>
        <end position="1518"/>
    </location>
</feature>
<feature type="compositionally biased region" description="Polar residues" evidence="5">
    <location>
        <begin position="1532"/>
        <end position="1547"/>
    </location>
</feature>
<feature type="compositionally biased region" description="Low complexity" evidence="5">
    <location>
        <begin position="1599"/>
        <end position="1609"/>
    </location>
</feature>
<feature type="compositionally biased region" description="Basic and acidic residues" evidence="5">
    <location>
        <begin position="1625"/>
        <end position="1635"/>
    </location>
</feature>
<feature type="modified residue" description="Phosphoserine" evidence="1">
    <location>
        <position position="100"/>
    </location>
</feature>
<feature type="modified residue" description="Phosphoserine" evidence="1">
    <location>
        <position position="146"/>
    </location>
</feature>
<feature type="modified residue" description="Phosphoserine" evidence="12">
    <location>
        <position position="401"/>
    </location>
</feature>
<feature type="modified residue" description="Phosphoserine" evidence="11">
    <location>
        <position position="1364"/>
    </location>
</feature>
<feature type="modified residue" description="Phosphothreonine" evidence="1">
    <location>
        <position position="1387"/>
    </location>
</feature>
<feature type="modified residue" description="N6-acetyllysine" evidence="9">
    <location>
        <position position="1448"/>
    </location>
</feature>
<feature type="modified residue" description="Phosphoserine" evidence="8">
    <location>
        <position position="1544"/>
    </location>
</feature>
<feature type="modified residue" description="Phosphoserine" evidence="1">
    <location>
        <position position="1547"/>
    </location>
</feature>
<feature type="modified residue" description="Phosphoserine" evidence="1">
    <location>
        <position position="1619"/>
    </location>
</feature>
<feature type="modified residue" description="Phosphoserine" evidence="1">
    <location>
        <position position="1622"/>
    </location>
</feature>
<feature type="modified residue" description="Phosphoserine" evidence="1">
    <location>
        <position position="1677"/>
    </location>
</feature>
<feature type="modified residue" description="Phosphothreonine" evidence="10">
    <location>
        <position position="1699"/>
    </location>
</feature>
<feature type="modified residue" description="Phosphothreonine" evidence="1">
    <location>
        <position position="1703"/>
    </location>
</feature>
<feature type="sequence variant" id="VAR_075045" description="Found in a patient with bilateral congenital cataracts; uncertain significance; lack of normal basal actin stress fiber formation; absence of SIPA1L3 and F-actin colocalization; dbSNP:rs138476311." evidence="7">
    <original>D</original>
    <variation>Y</variation>
    <location>
        <position position="148"/>
    </location>
</feature>
<feature type="sequence variant" id="VAR_025476" description="In dbSNP:rs2304133.">
    <original>G</original>
    <variation>S</variation>
    <location>
        <position position="1371"/>
    </location>
</feature>
<feature type="sequence variant" id="VAR_025477" description="In dbSNP:rs3745945.">
    <original>P</original>
    <variation>A</variation>
    <location>
        <position position="1450"/>
    </location>
</feature>
<sequence length="1781" mass="194610">MTTYRAIPSDGVDLAASCGARVGDVLPGPHTGDYAPLGFWAQNGSMSQPLGESPATATATATATTRPSPTTPAMPKMGVRARVADWPPKREALREHSNPSPSQDTDGTKATKMAHSMRSIQNGQPPTSTPASSGSKAFHRLSRRRSKDVEFQDGWPRSPGRAFLPLRHRSSSEITLSECDAEDAGEPRGARHTGALPLFREYGSTSSIDVQGMPEQSFFDILNEFRSEQPDARGCQALTELLRADPGPHLMGGGGGAKGDSHNGQPAKDSLLPLQPTKEKEKARKKPARGLGGGDTVDSSIFRKLRSSKPEGEAGRSPGEADEGRSPPEASRPWVCQKSFAHFDVQSMLFDLNEAAANRVSVSQRRNTTTGASAASAASAMASLTASRAHSLGGLDPAFTSTEDLNCKENLEQDLGDDNSNDLLLSCPHFRNEIGGECERNVSFSRASVGSPSSGEGHLAEPALSAYRTNASISVLEVPKEQQRTQSRPRQYSIEHVDLGARYYQDYFVGKEHANYFGVDEKLGPVAVSIKREKLEDHKEHGPQYQYRIIFRTRELITLRGSILEDATPTATKHGTGRGLPLKDALEYVIPELNIHCLRLALNTPKVTEQLLKLDEQGLCRKHKVGILYCKAGQSSEEEMYNNEEAGPAFEEFLSLIGEKVCLKGFTKYAAQLDVKTDSTGTHSLYTMYQDYEIMFHVSTLLPYTPNNRQQLLRKRHIGNDIVTIIFQEPGALPFTPKNIRSHFQHVFIIVRVHNPCTDNVCYSMAVTRSKDAPPFGPPIPSGTTFRKSDVFRDFLLAKVINAENAAHKSDKFHTMATRTRQEYLKDLAENCVSNTPIDSTGKFNLISLTSKKKEKTKARAGAEQHSAGAIAWRVVAQDYAQGVEIDCILGISNEFVVLLDLRTKEVVFNCYCGDVIGWTPDSSTLKIFYGRGDHIFLQATEGSVEDIREIVQRLKVMTSGWETVDMTLRRNGLGQLGFHVKYDGTVAEVEDYGFAWQAGLRQGSRLVEICKVAVVTLTHDQMIDLLRTSVTVKVVIIPPFEDGTPRRGWPETYDMNTSEPKTEQESITPGGRPPYRSNAPWQWSGPASHNSLPASKWATPTTPGHAQSLSRPLKQTPIVPFRESQPLHSKRPVSFPETPYTVSPAGADRVPPYRQPSGSFSTPGSATYVRYKPSPERYTAAPHPLLSLDPHFSHDGTSSGDSSSGGLTSQESTMERQKPEPLWHVPAQARLSAIAGSSGNKHPSRQDAAGKDSPNRHSKGEPQYSSHSSSNTLSSNASSSHSDDRWFDPLDPLEPEQDPLSKGGSSDSGIDTTLYTSSPSCMSLAKAPRPAKPHKPPGSMGLCGGGREAAGRSHHADRRREVSPAPAVAGQSKGYRPKLYSSGSSTPTGLAGGSRDPPRQPSDMGSRVGYPAQVYKTASAETPRPSQLAQPSPFQLSASVPKSFFSKQPVRNKHPTGWKRTEEPPPRPLPFSDPKKQVDTNTKNVFGQPRLRASLRDLRSPRKNYKSTIEDDLKKLIIMDNLGPEQERDTGQSPQKGLQRTLSDESLCSGRREPSFASPAGLEPGLPSDVLFTSTCAFPSSTLPARRQHQHPHPPVGPGATPAAGSGFPEKKSTISASELSLADGRDRPLRRLDPGLMPLPDTAAGLEWSSLVNAAKAYEVQRAVSLFSLNDPALSPDIPPAHSPVHSHLSLERGPPTPRTTPTMSEEPPLDLTGKVYQLEVMLKQLHTDLQKEKQDKVVLQSEVASLRQNNQRLQEESQAASEQLRKFAEIFCREKKEL</sequence>
<reference key="1">
    <citation type="submission" date="2002-10" db="EMBL/GenBank/DDBJ databases">
        <authorList>
            <person name="Matsuura K."/>
            <person name="Kohu K."/>
            <person name="Akiyama T."/>
        </authorList>
    </citation>
    <scope>NUCLEOTIDE SEQUENCE [MRNA]</scope>
</reference>
<reference key="2">
    <citation type="journal article" date="2004" name="Nature">
        <title>The DNA sequence and biology of human chromosome 19.</title>
        <authorList>
            <person name="Grimwood J."/>
            <person name="Gordon L.A."/>
            <person name="Olsen A.S."/>
            <person name="Terry A."/>
            <person name="Schmutz J."/>
            <person name="Lamerdin J.E."/>
            <person name="Hellsten U."/>
            <person name="Goodstein D."/>
            <person name="Couronne O."/>
            <person name="Tran-Gyamfi M."/>
            <person name="Aerts A."/>
            <person name="Altherr M."/>
            <person name="Ashworth L."/>
            <person name="Bajorek E."/>
            <person name="Black S."/>
            <person name="Branscomb E."/>
            <person name="Caenepeel S."/>
            <person name="Carrano A.V."/>
            <person name="Caoile C."/>
            <person name="Chan Y.M."/>
            <person name="Christensen M."/>
            <person name="Cleland C.A."/>
            <person name="Copeland A."/>
            <person name="Dalin E."/>
            <person name="Dehal P."/>
            <person name="Denys M."/>
            <person name="Detter J.C."/>
            <person name="Escobar J."/>
            <person name="Flowers D."/>
            <person name="Fotopulos D."/>
            <person name="Garcia C."/>
            <person name="Georgescu A.M."/>
            <person name="Glavina T."/>
            <person name="Gomez M."/>
            <person name="Gonzales E."/>
            <person name="Groza M."/>
            <person name="Hammon N."/>
            <person name="Hawkins T."/>
            <person name="Haydu L."/>
            <person name="Ho I."/>
            <person name="Huang W."/>
            <person name="Israni S."/>
            <person name="Jett J."/>
            <person name="Kadner K."/>
            <person name="Kimball H."/>
            <person name="Kobayashi A."/>
            <person name="Larionov V."/>
            <person name="Leem S.-H."/>
            <person name="Lopez F."/>
            <person name="Lou Y."/>
            <person name="Lowry S."/>
            <person name="Malfatti S."/>
            <person name="Martinez D."/>
            <person name="McCready P.M."/>
            <person name="Medina C."/>
            <person name="Morgan J."/>
            <person name="Nelson K."/>
            <person name="Nolan M."/>
            <person name="Ovcharenko I."/>
            <person name="Pitluck S."/>
            <person name="Pollard M."/>
            <person name="Popkie A.P."/>
            <person name="Predki P."/>
            <person name="Quan G."/>
            <person name="Ramirez L."/>
            <person name="Rash S."/>
            <person name="Retterer J."/>
            <person name="Rodriguez A."/>
            <person name="Rogers S."/>
            <person name="Salamov A."/>
            <person name="Salazar A."/>
            <person name="She X."/>
            <person name="Smith D."/>
            <person name="Slezak T."/>
            <person name="Solovyev V."/>
            <person name="Thayer N."/>
            <person name="Tice H."/>
            <person name="Tsai M."/>
            <person name="Ustaszewska A."/>
            <person name="Vo N."/>
            <person name="Wagner M."/>
            <person name="Wheeler J."/>
            <person name="Wu K."/>
            <person name="Xie G."/>
            <person name="Yang J."/>
            <person name="Dubchak I."/>
            <person name="Furey T.S."/>
            <person name="DeJong P."/>
            <person name="Dickson M."/>
            <person name="Gordon D."/>
            <person name="Eichler E.E."/>
            <person name="Pennacchio L.A."/>
            <person name="Richardson P."/>
            <person name="Stubbs L."/>
            <person name="Rokhsar D.S."/>
            <person name="Myers R.M."/>
            <person name="Rubin E.M."/>
            <person name="Lucas S.M."/>
        </authorList>
    </citation>
    <scope>NUCLEOTIDE SEQUENCE [LARGE SCALE GENOMIC DNA]</scope>
</reference>
<reference key="3">
    <citation type="journal article" date="1998" name="DNA Res.">
        <title>Prediction of the coding sequences of unidentified human genes. IX. The complete sequences of 100 new cDNA clones from brain which can code for large proteins in vitro.</title>
        <authorList>
            <person name="Nagase T."/>
            <person name="Ishikawa K."/>
            <person name="Miyajima N."/>
            <person name="Tanaka A."/>
            <person name="Kotani H."/>
            <person name="Nomura N."/>
            <person name="Ohara O."/>
        </authorList>
    </citation>
    <scope>NUCLEOTIDE SEQUENCE [LARGE SCALE MRNA] OF 414-1781</scope>
    <source>
        <tissue>Brain</tissue>
    </source>
</reference>
<reference key="4">
    <citation type="journal article" date="2002" name="DNA Res.">
        <title>Construction of expression-ready cDNA clones for KIAA genes: manual curation of 330 KIAA cDNA clones.</title>
        <authorList>
            <person name="Nakajima D."/>
            <person name="Okazaki N."/>
            <person name="Yamakawa H."/>
            <person name="Kikuno R."/>
            <person name="Ohara O."/>
            <person name="Nagase T."/>
        </authorList>
    </citation>
    <scope>SEQUENCE REVISION</scope>
</reference>
<reference key="5">
    <citation type="journal article" date="2008" name="Proc. Natl. Acad. Sci. U.S.A.">
        <title>A quantitative atlas of mitotic phosphorylation.</title>
        <authorList>
            <person name="Dephoure N."/>
            <person name="Zhou C."/>
            <person name="Villen J."/>
            <person name="Beausoleil S.A."/>
            <person name="Bakalarski C.E."/>
            <person name="Elledge S.J."/>
            <person name="Gygi S.P."/>
        </authorList>
    </citation>
    <scope>PHOSPHORYLATION [LARGE SCALE ANALYSIS] AT SER-1544</scope>
    <scope>IDENTIFICATION BY MASS SPECTROMETRY [LARGE SCALE ANALYSIS]</scope>
    <source>
        <tissue>Cervix carcinoma</tissue>
    </source>
</reference>
<reference key="6">
    <citation type="journal article" date="2009" name="Sci. Signal.">
        <title>Quantitative phosphoproteomic analysis of T cell receptor signaling reveals system-wide modulation of protein-protein interactions.</title>
        <authorList>
            <person name="Mayya V."/>
            <person name="Lundgren D.H."/>
            <person name="Hwang S.-I."/>
            <person name="Rezaul K."/>
            <person name="Wu L."/>
            <person name="Eng J.K."/>
            <person name="Rodionov V."/>
            <person name="Han D.K."/>
        </authorList>
    </citation>
    <scope>PHOSPHORYLATION [LARGE SCALE ANALYSIS] AT THR-1699</scope>
    <scope>IDENTIFICATION BY MASS SPECTROMETRY [LARGE SCALE ANALYSIS]</scope>
    <source>
        <tissue>Leukemic T-cell</tissue>
    </source>
</reference>
<reference key="7">
    <citation type="journal article" date="2009" name="Science">
        <title>Lysine acetylation targets protein complexes and co-regulates major cellular functions.</title>
        <authorList>
            <person name="Choudhary C."/>
            <person name="Kumar C."/>
            <person name="Gnad F."/>
            <person name="Nielsen M.L."/>
            <person name="Rehman M."/>
            <person name="Walther T.C."/>
            <person name="Olsen J.V."/>
            <person name="Mann M."/>
        </authorList>
    </citation>
    <scope>ACETYLATION [LARGE SCALE ANALYSIS] AT LYS-1448</scope>
    <scope>IDENTIFICATION BY MASS SPECTROMETRY [LARGE SCALE ANALYSIS]</scope>
</reference>
<reference key="8">
    <citation type="journal article" date="2013" name="J. Proteome Res.">
        <title>Toward a comprehensive characterization of a human cancer cell phosphoproteome.</title>
        <authorList>
            <person name="Zhou H."/>
            <person name="Di Palma S."/>
            <person name="Preisinger C."/>
            <person name="Peng M."/>
            <person name="Polat A.N."/>
            <person name="Heck A.J."/>
            <person name="Mohammed S."/>
        </authorList>
    </citation>
    <scope>PHOSPHORYLATION [LARGE SCALE ANALYSIS] AT SER-1364</scope>
    <scope>IDENTIFICATION BY MASS SPECTROMETRY [LARGE SCALE ANALYSIS]</scope>
    <source>
        <tissue>Cervix carcinoma</tissue>
        <tissue>Erythroleukemia</tissue>
    </source>
</reference>
<reference key="9">
    <citation type="journal article" date="2014" name="J. Proteomics">
        <title>An enzyme assisted RP-RPLC approach for in-depth analysis of human liver phosphoproteome.</title>
        <authorList>
            <person name="Bian Y."/>
            <person name="Song C."/>
            <person name="Cheng K."/>
            <person name="Dong M."/>
            <person name="Wang F."/>
            <person name="Huang J."/>
            <person name="Sun D."/>
            <person name="Wang L."/>
            <person name="Ye M."/>
            <person name="Zou H."/>
        </authorList>
    </citation>
    <scope>PHOSPHORYLATION [LARGE SCALE ANALYSIS] AT SER-401</scope>
    <scope>IDENTIFICATION BY MASS SPECTROMETRY [LARGE SCALE ANALYSIS]</scope>
    <source>
        <tissue>Liver</tissue>
    </source>
</reference>
<reference key="10">
    <citation type="journal article" date="2015" name="Eur. J. Hum. Genet.">
        <title>SIPA1L3 identified by linkage analysis and whole-exome sequencing as a novel gene for autosomal recessive congenital cataract.</title>
        <authorList>
            <person name="Evers C."/>
            <person name="Paramasivam N."/>
            <person name="Hinderhofer K."/>
            <person name="Fischer C."/>
            <person name="Granzow M."/>
            <person name="Schmidt-Bacher A."/>
            <person name="Eils R."/>
            <person name="Steinbeisser H."/>
            <person name="Schlesner M."/>
            <person name="Moog U."/>
        </authorList>
    </citation>
    <scope>INVOLVEMENT IN CTRCT45</scope>
</reference>
<reference key="11">
    <citation type="journal article" date="2015" name="Hum. Mol. Genet.">
        <title>Mutations in SIPA1L3 cause eye defects through disruption of cell polarity and cytoskeleton organization.</title>
        <authorList>
            <person name="Greenlees R."/>
            <person name="Mihelec M."/>
            <person name="Yousoof S."/>
            <person name="Speidel D."/>
            <person name="Wu S.K."/>
            <person name="Rinkwitz S."/>
            <person name="Prokudin I."/>
            <person name="Perveen R."/>
            <person name="Cheng A."/>
            <person name="Ma A."/>
            <person name="Nash B."/>
            <person name="Gillespie R."/>
            <person name="Loebel D.A."/>
            <person name="Clayton-Smith J."/>
            <person name="Lloyd I.C."/>
            <person name="Grigg J.R."/>
            <person name="Tam P.P."/>
            <person name="Yap A.S."/>
            <person name="Becker T.S."/>
            <person name="Black G.C."/>
            <person name="Semina E."/>
            <person name="Jamieson R.V."/>
        </authorList>
    </citation>
    <scope>VARIANT TYR-148</scope>
    <scope>FUNCTION</scope>
    <scope>SUBCELLULAR LOCATION</scope>
    <scope>CHARACTERIZATION OF VARIANT TYR-148</scope>
    <scope>CHROMOSOMAL TRANSLOCATION</scope>
</reference>
<gene>
    <name type="primary">SIPA1L3</name>
    <name type="synonym">KIAA0545</name>
    <name type="synonym">SPAL3</name>
</gene>
<protein>
    <recommendedName>
        <fullName>Signal-induced proliferation-associated 1-like protein 3</fullName>
        <shortName>SIPA1-like protein 3</shortName>
    </recommendedName>
    <alternativeName>
        <fullName>SPA-1-like protein 3</fullName>
    </alternativeName>
</protein>